<accession>B5ZQU1</accession>
<reference key="1">
    <citation type="journal article" date="2010" name="Stand. Genomic Sci.">
        <title>Complete genome sequence of Rhizobium leguminosarum bv trifolii strain WSM2304, an effective microsymbiont of the South American clover Trifolium polymorphum.</title>
        <authorList>
            <person name="Reeve W."/>
            <person name="O'Hara G."/>
            <person name="Chain P."/>
            <person name="Ardley J."/>
            <person name="Brau L."/>
            <person name="Nandesena K."/>
            <person name="Tiwari R."/>
            <person name="Malfatti S."/>
            <person name="Kiss H."/>
            <person name="Lapidus A."/>
            <person name="Copeland A."/>
            <person name="Nolan M."/>
            <person name="Land M."/>
            <person name="Ivanova N."/>
            <person name="Mavromatis K."/>
            <person name="Markowitz V."/>
            <person name="Kyrpides N."/>
            <person name="Melino V."/>
            <person name="Denton M."/>
            <person name="Yates R."/>
            <person name="Howieson J."/>
        </authorList>
    </citation>
    <scope>NUCLEOTIDE SEQUENCE [LARGE SCALE GENOMIC DNA]</scope>
    <source>
        <strain>WSM2304</strain>
    </source>
</reference>
<dbReference type="EC" id="6.3.5.3" evidence="1"/>
<dbReference type="EMBL" id="CP001191">
    <property type="protein sequence ID" value="ACI55219.1"/>
    <property type="molecule type" value="Genomic_DNA"/>
</dbReference>
<dbReference type="RefSeq" id="WP_012557806.1">
    <property type="nucleotide sequence ID" value="NC_011369.1"/>
</dbReference>
<dbReference type="SMR" id="B5ZQU1"/>
<dbReference type="STRING" id="395492.Rleg2_1934"/>
<dbReference type="KEGG" id="rlt:Rleg2_1934"/>
<dbReference type="eggNOG" id="COG0046">
    <property type="taxonomic scope" value="Bacteria"/>
</dbReference>
<dbReference type="HOGENOM" id="CLU_003100_0_1_5"/>
<dbReference type="UniPathway" id="UPA00074">
    <property type="reaction ID" value="UER00128"/>
</dbReference>
<dbReference type="Proteomes" id="UP000008330">
    <property type="component" value="Chromosome"/>
</dbReference>
<dbReference type="GO" id="GO:0005737">
    <property type="term" value="C:cytoplasm"/>
    <property type="evidence" value="ECO:0007669"/>
    <property type="project" value="UniProtKB-SubCell"/>
</dbReference>
<dbReference type="GO" id="GO:0005524">
    <property type="term" value="F:ATP binding"/>
    <property type="evidence" value="ECO:0007669"/>
    <property type="project" value="UniProtKB-UniRule"/>
</dbReference>
<dbReference type="GO" id="GO:0000287">
    <property type="term" value="F:magnesium ion binding"/>
    <property type="evidence" value="ECO:0007669"/>
    <property type="project" value="UniProtKB-UniRule"/>
</dbReference>
<dbReference type="GO" id="GO:0004642">
    <property type="term" value="F:phosphoribosylformylglycinamidine synthase activity"/>
    <property type="evidence" value="ECO:0007669"/>
    <property type="project" value="UniProtKB-UniRule"/>
</dbReference>
<dbReference type="GO" id="GO:0006189">
    <property type="term" value="P:'de novo' IMP biosynthetic process"/>
    <property type="evidence" value="ECO:0007669"/>
    <property type="project" value="UniProtKB-UniRule"/>
</dbReference>
<dbReference type="CDD" id="cd02203">
    <property type="entry name" value="PurL_repeat1"/>
    <property type="match status" value="1"/>
</dbReference>
<dbReference type="CDD" id="cd02204">
    <property type="entry name" value="PurL_repeat2"/>
    <property type="match status" value="1"/>
</dbReference>
<dbReference type="FunFam" id="3.30.1330.10:FF:000004">
    <property type="entry name" value="Phosphoribosylformylglycinamidine synthase subunit PurL"/>
    <property type="match status" value="1"/>
</dbReference>
<dbReference type="Gene3D" id="3.90.650.10">
    <property type="entry name" value="PurM-like C-terminal domain"/>
    <property type="match status" value="2"/>
</dbReference>
<dbReference type="Gene3D" id="3.30.1330.10">
    <property type="entry name" value="PurM-like, N-terminal domain"/>
    <property type="match status" value="2"/>
</dbReference>
<dbReference type="HAMAP" id="MF_00420">
    <property type="entry name" value="PurL_2"/>
    <property type="match status" value="1"/>
</dbReference>
<dbReference type="InterPro" id="IPR010074">
    <property type="entry name" value="PRibForGlyAmidine_synth_PurL"/>
</dbReference>
<dbReference type="InterPro" id="IPR041609">
    <property type="entry name" value="PurL_linker"/>
</dbReference>
<dbReference type="InterPro" id="IPR010918">
    <property type="entry name" value="PurM-like_C_dom"/>
</dbReference>
<dbReference type="InterPro" id="IPR036676">
    <property type="entry name" value="PurM-like_C_sf"/>
</dbReference>
<dbReference type="InterPro" id="IPR016188">
    <property type="entry name" value="PurM-like_N"/>
</dbReference>
<dbReference type="InterPro" id="IPR036921">
    <property type="entry name" value="PurM-like_N_sf"/>
</dbReference>
<dbReference type="NCBIfam" id="TIGR01736">
    <property type="entry name" value="FGAM_synth_II"/>
    <property type="match status" value="1"/>
</dbReference>
<dbReference type="NCBIfam" id="NF002290">
    <property type="entry name" value="PRK01213.1"/>
    <property type="match status" value="1"/>
</dbReference>
<dbReference type="PANTHER" id="PTHR43555">
    <property type="entry name" value="PHOSPHORIBOSYLFORMYLGLYCINAMIDINE SYNTHASE SUBUNIT PURL"/>
    <property type="match status" value="1"/>
</dbReference>
<dbReference type="PANTHER" id="PTHR43555:SF1">
    <property type="entry name" value="PHOSPHORIBOSYLFORMYLGLYCINAMIDINE SYNTHASE SUBUNIT PURL"/>
    <property type="match status" value="1"/>
</dbReference>
<dbReference type="Pfam" id="PF00586">
    <property type="entry name" value="AIRS"/>
    <property type="match status" value="2"/>
</dbReference>
<dbReference type="Pfam" id="PF02769">
    <property type="entry name" value="AIRS_C"/>
    <property type="match status" value="2"/>
</dbReference>
<dbReference type="Pfam" id="PF18072">
    <property type="entry name" value="FGAR-AT_linker"/>
    <property type="match status" value="1"/>
</dbReference>
<dbReference type="PIRSF" id="PIRSF001587">
    <property type="entry name" value="FGAM_synthase_II"/>
    <property type="match status" value="1"/>
</dbReference>
<dbReference type="SUPFAM" id="SSF56042">
    <property type="entry name" value="PurM C-terminal domain-like"/>
    <property type="match status" value="2"/>
</dbReference>
<dbReference type="SUPFAM" id="SSF55326">
    <property type="entry name" value="PurM N-terminal domain-like"/>
    <property type="match status" value="2"/>
</dbReference>
<keyword id="KW-0067">ATP-binding</keyword>
<keyword id="KW-0963">Cytoplasm</keyword>
<keyword id="KW-0436">Ligase</keyword>
<keyword id="KW-0460">Magnesium</keyword>
<keyword id="KW-0479">Metal-binding</keyword>
<keyword id="KW-0547">Nucleotide-binding</keyword>
<keyword id="KW-0658">Purine biosynthesis</keyword>
<keyword id="KW-1185">Reference proteome</keyword>
<gene>
    <name evidence="1" type="primary">purL</name>
    <name type="ordered locus">Rleg2_1934</name>
</gene>
<name>PURL_RHILW</name>
<proteinExistence type="inferred from homology"/>
<comment type="function">
    <text evidence="1">Part of the phosphoribosylformylglycinamidine synthase complex involved in the purines biosynthetic pathway. Catalyzes the ATP-dependent conversion of formylglycinamide ribonucleotide (FGAR) and glutamine to yield formylglycinamidine ribonucleotide (FGAM) and glutamate. The FGAM synthase complex is composed of three subunits. PurQ produces an ammonia molecule by converting glutamine to glutamate. PurL transfers the ammonia molecule to FGAR to form FGAM in an ATP-dependent manner. PurS interacts with PurQ and PurL and is thought to assist in the transfer of the ammonia molecule from PurQ to PurL.</text>
</comment>
<comment type="catalytic activity">
    <reaction evidence="1">
        <text>N(2)-formyl-N(1)-(5-phospho-beta-D-ribosyl)glycinamide + L-glutamine + ATP + H2O = 2-formamido-N(1)-(5-O-phospho-beta-D-ribosyl)acetamidine + L-glutamate + ADP + phosphate + H(+)</text>
        <dbReference type="Rhea" id="RHEA:17129"/>
        <dbReference type="ChEBI" id="CHEBI:15377"/>
        <dbReference type="ChEBI" id="CHEBI:15378"/>
        <dbReference type="ChEBI" id="CHEBI:29985"/>
        <dbReference type="ChEBI" id="CHEBI:30616"/>
        <dbReference type="ChEBI" id="CHEBI:43474"/>
        <dbReference type="ChEBI" id="CHEBI:58359"/>
        <dbReference type="ChEBI" id="CHEBI:147286"/>
        <dbReference type="ChEBI" id="CHEBI:147287"/>
        <dbReference type="ChEBI" id="CHEBI:456216"/>
        <dbReference type="EC" id="6.3.5.3"/>
    </reaction>
</comment>
<comment type="pathway">
    <text evidence="1">Purine metabolism; IMP biosynthesis via de novo pathway; 5-amino-1-(5-phospho-D-ribosyl)imidazole from N(2)-formyl-N(1)-(5-phospho-D-ribosyl)glycinamide: step 1/2.</text>
</comment>
<comment type="subunit">
    <text evidence="1">Monomer. Part of the FGAM synthase complex composed of 1 PurL, 1 PurQ and 2 PurS subunits.</text>
</comment>
<comment type="subcellular location">
    <subcellularLocation>
        <location evidence="1">Cytoplasm</location>
    </subcellularLocation>
</comment>
<comment type="similarity">
    <text evidence="1">Belongs to the FGAMS family.</text>
</comment>
<protein>
    <recommendedName>
        <fullName evidence="1">Phosphoribosylformylglycinamidine synthase subunit PurL</fullName>
        <shortName evidence="1">FGAM synthase</shortName>
        <ecNumber evidence="1">6.3.5.3</ecNumber>
    </recommendedName>
    <alternativeName>
        <fullName evidence="1">Formylglycinamide ribonucleotide amidotransferase subunit II</fullName>
        <shortName evidence="1">FGAR amidotransferase II</shortName>
        <shortName evidence="1">FGAR-AT II</shortName>
    </alternativeName>
    <alternativeName>
        <fullName evidence="1">Glutamine amidotransferase PurL</fullName>
    </alternativeName>
    <alternativeName>
        <fullName evidence="1">Phosphoribosylformylglycinamidine synthase subunit II</fullName>
    </alternativeName>
</protein>
<evidence type="ECO:0000255" key="1">
    <source>
        <dbReference type="HAMAP-Rule" id="MF_00420"/>
    </source>
</evidence>
<organism>
    <name type="scientific">Rhizobium leguminosarum bv. trifolii (strain WSM2304)</name>
    <dbReference type="NCBI Taxonomy" id="395492"/>
    <lineage>
        <taxon>Bacteria</taxon>
        <taxon>Pseudomonadati</taxon>
        <taxon>Pseudomonadota</taxon>
        <taxon>Alphaproteobacteria</taxon>
        <taxon>Hyphomicrobiales</taxon>
        <taxon>Rhizobiaceae</taxon>
        <taxon>Rhizobium/Agrobacterium group</taxon>
        <taxon>Rhizobium</taxon>
    </lineage>
</organism>
<feature type="chain" id="PRO_1000194833" description="Phosphoribosylformylglycinamidine synthase subunit PurL">
    <location>
        <begin position="1"/>
        <end position="743"/>
    </location>
</feature>
<feature type="active site" evidence="1">
    <location>
        <position position="50"/>
    </location>
</feature>
<feature type="active site" description="Proton acceptor" evidence="1">
    <location>
        <position position="96"/>
    </location>
</feature>
<feature type="binding site" evidence="1">
    <location>
        <position position="53"/>
    </location>
    <ligand>
        <name>ATP</name>
        <dbReference type="ChEBI" id="CHEBI:30616"/>
    </ligand>
</feature>
<feature type="binding site" evidence="1">
    <location>
        <position position="92"/>
    </location>
    <ligand>
        <name>ATP</name>
        <dbReference type="ChEBI" id="CHEBI:30616"/>
    </ligand>
</feature>
<feature type="binding site" evidence="1">
    <location>
        <position position="94"/>
    </location>
    <ligand>
        <name>Mg(2+)</name>
        <dbReference type="ChEBI" id="CHEBI:18420"/>
        <label>1</label>
    </ligand>
</feature>
<feature type="binding site" evidence="1">
    <location>
        <begin position="95"/>
        <end position="98"/>
    </location>
    <ligand>
        <name>substrate</name>
    </ligand>
</feature>
<feature type="binding site" evidence="1">
    <location>
        <position position="117"/>
    </location>
    <ligand>
        <name>substrate</name>
    </ligand>
</feature>
<feature type="binding site" evidence="1">
    <location>
        <position position="118"/>
    </location>
    <ligand>
        <name>Mg(2+)</name>
        <dbReference type="ChEBI" id="CHEBI:18420"/>
        <label>2</label>
    </ligand>
</feature>
<feature type="binding site" evidence="1">
    <location>
        <position position="241"/>
    </location>
    <ligand>
        <name>substrate</name>
    </ligand>
</feature>
<feature type="binding site" evidence="1">
    <location>
        <position position="269"/>
    </location>
    <ligand>
        <name>Mg(2+)</name>
        <dbReference type="ChEBI" id="CHEBI:18420"/>
        <label>2</label>
    </ligand>
</feature>
<feature type="binding site" evidence="1">
    <location>
        <begin position="313"/>
        <end position="315"/>
    </location>
    <ligand>
        <name>substrate</name>
    </ligand>
</feature>
<feature type="binding site" evidence="1">
    <location>
        <position position="495"/>
    </location>
    <ligand>
        <name>ATP</name>
        <dbReference type="ChEBI" id="CHEBI:30616"/>
    </ligand>
</feature>
<feature type="binding site" evidence="1">
    <location>
        <position position="532"/>
    </location>
    <ligand>
        <name>ATP</name>
        <dbReference type="ChEBI" id="CHEBI:30616"/>
    </ligand>
</feature>
<feature type="binding site" evidence="1">
    <location>
        <position position="533"/>
    </location>
    <ligand>
        <name>Mg(2+)</name>
        <dbReference type="ChEBI" id="CHEBI:18420"/>
        <label>1</label>
    </ligand>
</feature>
<feature type="binding site" evidence="1">
    <location>
        <position position="535"/>
    </location>
    <ligand>
        <name>substrate</name>
    </ligand>
</feature>
<sequence>MTIPNTIPITPELIAGHGLKPDEYQRILDLIGREPTFTELGIFSAMWNEHCSYKSSKKWLRTLPTKGPRVIQGPGENAGVVDIDDGDCVVFKMESHNHPSYIEPYQGAATGVGGILRDVFTMGARPIAAMNALRFGEPDHPKTRHLVSGVVSGVGGYGNSFGVPTVGGEVEFDARYNGNILVNAFAAGIAKSNAIFLSEAKGVGLPVVYLGAKTGRDGVGGATMASAEFDESIEEKRPTVQVGDPFTEKCLLEACLELMQTGAVIAIQDMGAAGLTCSAVEMGAKGDLGILLELDKVPVREERMTAYEMMLSESQERMLMVLQPEKEQEAKAIFVKWGLDFAIVGKTTDDLRFRVMHQGEEVANLPIKDLGDQAPEYDRPWRESGKQAPLPANLVAAPKDYGQALLQLVGSANQSSRRWVYEQYDTLIQGNSLQLPGGDAGVVRVDGHPSKALAFSSDVTPRYVEADPFEGGKQAVAECWRNITATGAEPLAATDNLNFGNPEKPEIMGQFVQAVKGIGEACRALDFPIVSGNVSLYNETNGVAILPTPTIAGVGLLPDWRKMARIGSANDGDKVIMIGVDGSHLGQSVYLRDVLDSREGPAPEVDLFAERRNGDFVRSVIRNGQATACHDISSGGLAVALAEMVMASDKGLAIDLGEGKGAPHALLFGEDQARYVLTVPADVADFLCANAEGAGVPFRRLGTVGGTALTVGDLISLPIQQLRDAHESWFPDFMEGRGELAAE</sequence>